<accession>Q5XUW8</accession>
<organism>
    <name type="scientific">Bothrops insularis</name>
    <name type="common">Golden lancehead</name>
    <name type="synonym">Lachesis insularis</name>
    <dbReference type="NCBI Taxonomy" id="8723"/>
    <lineage>
        <taxon>Eukaryota</taxon>
        <taxon>Metazoa</taxon>
        <taxon>Chordata</taxon>
        <taxon>Craniata</taxon>
        <taxon>Vertebrata</taxon>
        <taxon>Euteleostomi</taxon>
        <taxon>Lepidosauria</taxon>
        <taxon>Squamata</taxon>
        <taxon>Bifurcata</taxon>
        <taxon>Unidentata</taxon>
        <taxon>Episquamata</taxon>
        <taxon>Toxicofera</taxon>
        <taxon>Serpentes</taxon>
        <taxon>Colubroidea</taxon>
        <taxon>Viperidae</taxon>
        <taxon>Crotalinae</taxon>
        <taxon>Bothrops</taxon>
    </lineage>
</organism>
<proteinExistence type="evidence at protein level"/>
<name>VM2IA_BOTIN</name>
<evidence type="ECO:0000250" key="1"/>
<evidence type="ECO:0000250" key="2">
    <source>
        <dbReference type="UniProtKB" id="P30403"/>
    </source>
</evidence>
<evidence type="ECO:0000255" key="3"/>
<evidence type="ECO:0000255" key="4">
    <source>
        <dbReference type="PROSITE-ProRule" id="PRU00068"/>
    </source>
</evidence>
<evidence type="ECO:0000255" key="5">
    <source>
        <dbReference type="PROSITE-ProRule" id="PRU00276"/>
    </source>
</evidence>
<evidence type="ECO:0000269" key="6">
    <source>
    </source>
</evidence>
<evidence type="ECO:0000269" key="7">
    <source>
    </source>
</evidence>
<evidence type="ECO:0000303" key="8">
    <source>
    </source>
</evidence>
<evidence type="ECO:0000305" key="9"/>
<evidence type="ECO:0000305" key="10">
    <source>
    </source>
</evidence>
<evidence type="ECO:0000305" key="11">
    <source>
    </source>
</evidence>
<dbReference type="EC" id="3.4.24.-"/>
<dbReference type="EMBL" id="AY736107">
    <property type="protein sequence ID" value="AAU47334.1"/>
    <property type="molecule type" value="mRNA"/>
</dbReference>
<dbReference type="SMR" id="Q5XUW8"/>
<dbReference type="MEROPS" id="M12.325"/>
<dbReference type="GO" id="GO:0005576">
    <property type="term" value="C:extracellular region"/>
    <property type="evidence" value="ECO:0007669"/>
    <property type="project" value="UniProtKB-SubCell"/>
</dbReference>
<dbReference type="GO" id="GO:0005886">
    <property type="term" value="C:plasma membrane"/>
    <property type="evidence" value="ECO:0007669"/>
    <property type="project" value="TreeGrafter"/>
</dbReference>
<dbReference type="GO" id="GO:0046872">
    <property type="term" value="F:metal ion binding"/>
    <property type="evidence" value="ECO:0007669"/>
    <property type="project" value="UniProtKB-KW"/>
</dbReference>
<dbReference type="GO" id="GO:0004222">
    <property type="term" value="F:metalloendopeptidase activity"/>
    <property type="evidence" value="ECO:0007669"/>
    <property type="project" value="InterPro"/>
</dbReference>
<dbReference type="GO" id="GO:0016504">
    <property type="term" value="F:peptidase activator activity"/>
    <property type="evidence" value="ECO:0007669"/>
    <property type="project" value="UniProtKB-KW"/>
</dbReference>
<dbReference type="GO" id="GO:0090729">
    <property type="term" value="F:toxin activity"/>
    <property type="evidence" value="ECO:0007669"/>
    <property type="project" value="UniProtKB-KW"/>
</dbReference>
<dbReference type="GO" id="GO:0006508">
    <property type="term" value="P:proteolysis"/>
    <property type="evidence" value="ECO:0007669"/>
    <property type="project" value="UniProtKB-KW"/>
</dbReference>
<dbReference type="CDD" id="cd04269">
    <property type="entry name" value="ZnMc_adamalysin_II_like"/>
    <property type="match status" value="1"/>
</dbReference>
<dbReference type="FunFam" id="3.40.390.10:FF:000002">
    <property type="entry name" value="Disintegrin and metalloproteinase domain-containing protein 22"/>
    <property type="match status" value="1"/>
</dbReference>
<dbReference type="FunFam" id="4.10.70.10:FF:000005">
    <property type="entry name" value="Zinc metalloproteinase/disintegrin"/>
    <property type="match status" value="1"/>
</dbReference>
<dbReference type="Gene3D" id="3.40.390.10">
    <property type="entry name" value="Collagenase (Catalytic Domain)"/>
    <property type="match status" value="1"/>
</dbReference>
<dbReference type="Gene3D" id="4.10.70.10">
    <property type="entry name" value="Disintegrin domain"/>
    <property type="match status" value="1"/>
</dbReference>
<dbReference type="InterPro" id="IPR018358">
    <property type="entry name" value="Disintegrin_CS"/>
</dbReference>
<dbReference type="InterPro" id="IPR001762">
    <property type="entry name" value="Disintegrin_dom"/>
</dbReference>
<dbReference type="InterPro" id="IPR036436">
    <property type="entry name" value="Disintegrin_dom_sf"/>
</dbReference>
<dbReference type="InterPro" id="IPR024079">
    <property type="entry name" value="MetalloPept_cat_dom_sf"/>
</dbReference>
<dbReference type="InterPro" id="IPR001590">
    <property type="entry name" value="Peptidase_M12B"/>
</dbReference>
<dbReference type="InterPro" id="IPR002870">
    <property type="entry name" value="Peptidase_M12B_N"/>
</dbReference>
<dbReference type="InterPro" id="IPR034027">
    <property type="entry name" value="Reprolysin_adamalysin"/>
</dbReference>
<dbReference type="PANTHER" id="PTHR11905">
    <property type="entry name" value="ADAM A DISINTEGRIN AND METALLOPROTEASE DOMAIN"/>
    <property type="match status" value="1"/>
</dbReference>
<dbReference type="PANTHER" id="PTHR11905:SF32">
    <property type="entry name" value="DISINTEGRIN AND METALLOPROTEINASE DOMAIN-CONTAINING PROTEIN 28"/>
    <property type="match status" value="1"/>
</dbReference>
<dbReference type="Pfam" id="PF00200">
    <property type="entry name" value="Disintegrin"/>
    <property type="match status" value="1"/>
</dbReference>
<dbReference type="Pfam" id="PF01562">
    <property type="entry name" value="Pep_M12B_propep"/>
    <property type="match status" value="1"/>
</dbReference>
<dbReference type="Pfam" id="PF01421">
    <property type="entry name" value="Reprolysin"/>
    <property type="match status" value="1"/>
</dbReference>
<dbReference type="PRINTS" id="PR00289">
    <property type="entry name" value="DISINTEGRIN"/>
</dbReference>
<dbReference type="SMART" id="SM00050">
    <property type="entry name" value="DISIN"/>
    <property type="match status" value="1"/>
</dbReference>
<dbReference type="SUPFAM" id="SSF57552">
    <property type="entry name" value="Blood coagulation inhibitor (disintegrin)"/>
    <property type="match status" value="1"/>
</dbReference>
<dbReference type="SUPFAM" id="SSF55486">
    <property type="entry name" value="Metalloproteases ('zincins'), catalytic domain"/>
    <property type="match status" value="1"/>
</dbReference>
<dbReference type="PROSITE" id="PS50215">
    <property type="entry name" value="ADAM_MEPRO"/>
    <property type="match status" value="1"/>
</dbReference>
<dbReference type="PROSITE" id="PS00427">
    <property type="entry name" value="DISINTEGRIN_1"/>
    <property type="match status" value="1"/>
</dbReference>
<dbReference type="PROSITE" id="PS50214">
    <property type="entry name" value="DISINTEGRIN_2"/>
    <property type="match status" value="1"/>
</dbReference>
<dbReference type="PROSITE" id="PS00142">
    <property type="entry name" value="ZINC_PROTEASE"/>
    <property type="match status" value="1"/>
</dbReference>
<comment type="function">
    <molecule>Snake venom metalloproteinase insularinase-A</molecule>
    <text evidence="6">Non-hemorrhagic proteinase that activates prothrombin (F2) calcium-independently. Activates factor X (F10) and hydrolyzes the Aalpha-chain and more slowly the Bbeta-chain of fibrin and fibrinogen without affecting the gamma chain. It induces neither detachment nor apoptosis of human endothelial cells and is also not able to trigger an endothelial pro-inflammatory cell response. Nitric oxide and prostacyclin levels released by endothelial cells are significantly increased after treatment with insularinase A.</text>
</comment>
<comment type="function">
    <molecule>Disintegrin insularin</molecule>
    <text evidence="7">Inhibits ADP-induced platelet aggregation (IC(50)=0.8 uM for native protein) (PubMed:21073888). Interestingly, inhibits the adhesion of HUVECs to immobilized fibrinogen at very low concentrations (IC(50)=36 nM) (PubMed:21073888).</text>
</comment>
<comment type="cofactor">
    <cofactor evidence="1">
        <name>Zn(2+)</name>
        <dbReference type="ChEBI" id="CHEBI:29105"/>
    </cofactor>
    <text evidence="1">Binds 1 zinc ion per subunit.</text>
</comment>
<comment type="activity regulation">
    <text evidence="6">Inhibited by EDTA, and 1,10-phenanthroline, but not by PMSF.</text>
</comment>
<comment type="subunit">
    <text evidence="6">Monomer (metalloprotease).</text>
</comment>
<comment type="subcellular location">
    <subcellularLocation>
        <location evidence="6 7">Secreted</location>
    </subcellularLocation>
</comment>
<comment type="tissue specificity">
    <text evidence="10 11">Expressed by the venom gland.</text>
</comment>
<comment type="PTM">
    <text>The N-terminus is blocked.</text>
</comment>
<comment type="PTM">
    <text>Not glycosylated.</text>
</comment>
<comment type="mass spectrometry" mass="22639.0" method="MALDI" evidence="6">
    <molecule>Snake venom metalloproteinase insularinase-A</molecule>
</comment>
<comment type="similarity">
    <text evidence="9">Belongs to the venom metalloproteinase (M12B) family. P-II subfamily. P-IIa sub-subfamily.</text>
</comment>
<feature type="signal peptide" evidence="3">
    <location>
        <begin position="1"/>
        <end position="20"/>
    </location>
</feature>
<feature type="propeptide" id="PRO_5000094063" evidence="1">
    <location>
        <begin position="21"/>
        <end position="192"/>
    </location>
</feature>
<feature type="chain" id="PRO_5000094064" description="Snake venom metalloproteinase insularinase-A" evidence="10">
    <location>
        <begin position="193"/>
        <end position="393"/>
    </location>
</feature>
<feature type="propeptide" id="PRO_0000326262" evidence="1">
    <location>
        <begin position="394"/>
        <end position="403"/>
    </location>
</feature>
<feature type="chain" id="PRO_5000094065" description="Disintegrin insularin" evidence="11">
    <location>
        <begin position="404"/>
        <end position="476"/>
    </location>
</feature>
<feature type="domain" description="Peptidase M12B" evidence="5">
    <location>
        <begin position="198"/>
        <end position="393"/>
    </location>
</feature>
<feature type="domain" description="Disintegrin" evidence="4">
    <location>
        <begin position="395"/>
        <end position="476"/>
    </location>
</feature>
<feature type="short sequence motif" description="Cell attachment site" evidence="11">
    <location>
        <begin position="454"/>
        <end position="456"/>
    </location>
</feature>
<feature type="active site" evidence="5">
    <location>
        <position position="335"/>
    </location>
</feature>
<feature type="binding site" evidence="1">
    <location>
        <position position="201"/>
    </location>
    <ligand>
        <name>Ca(2+)</name>
        <dbReference type="ChEBI" id="CHEBI:29108"/>
    </ligand>
</feature>
<feature type="binding site" evidence="1">
    <location>
        <position position="285"/>
    </location>
    <ligand>
        <name>Ca(2+)</name>
        <dbReference type="ChEBI" id="CHEBI:29108"/>
    </ligand>
</feature>
<feature type="binding site" evidence="5">
    <location>
        <position position="334"/>
    </location>
    <ligand>
        <name>Zn(2+)</name>
        <dbReference type="ChEBI" id="CHEBI:29105"/>
        <note>catalytic</note>
    </ligand>
</feature>
<feature type="binding site" evidence="5">
    <location>
        <position position="338"/>
    </location>
    <ligand>
        <name>Zn(2+)</name>
        <dbReference type="ChEBI" id="CHEBI:29105"/>
        <note>catalytic</note>
    </ligand>
</feature>
<feature type="binding site" evidence="5">
    <location>
        <position position="344"/>
    </location>
    <ligand>
        <name>Zn(2+)</name>
        <dbReference type="ChEBI" id="CHEBI:29105"/>
        <note>catalytic</note>
    </ligand>
</feature>
<feature type="binding site" evidence="1">
    <location>
        <position position="388"/>
    </location>
    <ligand>
        <name>Ca(2+)</name>
        <dbReference type="ChEBI" id="CHEBI:29108"/>
    </ligand>
</feature>
<feature type="binding site" evidence="1">
    <location>
        <position position="391"/>
    </location>
    <ligand>
        <name>Ca(2+)</name>
        <dbReference type="ChEBI" id="CHEBI:29108"/>
    </ligand>
</feature>
<feature type="modified residue" description="Pyrrolidone carboxylic acid" evidence="1">
    <location>
        <position position="193"/>
    </location>
</feature>
<feature type="disulfide bond" evidence="5">
    <location>
        <begin position="309"/>
        <end position="388"/>
    </location>
</feature>
<feature type="disulfide bond" evidence="5">
    <location>
        <begin position="348"/>
        <end position="372"/>
    </location>
</feature>
<feature type="disulfide bond" evidence="5">
    <location>
        <begin position="350"/>
        <end position="355"/>
    </location>
</feature>
<feature type="disulfide bond" evidence="2">
    <location>
        <begin position="409"/>
        <end position="424"/>
    </location>
</feature>
<feature type="disulfide bond" evidence="2">
    <location>
        <begin position="411"/>
        <end position="419"/>
    </location>
</feature>
<feature type="disulfide bond" evidence="2">
    <location>
        <begin position="418"/>
        <end position="441"/>
    </location>
</feature>
<feature type="disulfide bond" evidence="2">
    <location>
        <begin position="432"/>
        <end position="438"/>
    </location>
</feature>
<feature type="disulfide bond" evidence="2">
    <location>
        <begin position="437"/>
        <end position="462"/>
    </location>
</feature>
<feature type="disulfide bond" evidence="2 4">
    <location>
        <begin position="450"/>
        <end position="469"/>
    </location>
</feature>
<sequence length="476" mass="53313">MIQVLLVTICLAAFPYQGSSIILESGNVNDYEVVYARKVTELPKGAVQQKYEDAMQYEFKVNGEPVVLHLEKNKGLFSEDYSETHYSPDGRQIITYPPFEDHCYYHGRIENDADSTASISACNGLKGHFKLQGETYLIEPLKLPDSEAHAVYKYENVEKEDEAPKMCGVTETNWESYEPIEKASQSNLTPEQQKFSPRYIELAVVADHGMFTKYNSNLNTIRTRVHEMVNTLNGFFRSVNVDASLANLEVWSKKDLIKVEKDSSKTLTSFGEWRERDLLPRISHDHAQLLTTIVFDQQTIGLAYTAGMCDPRQSVAVVMDHSKKNLRVAVTMAHELGHNLGMDHDDTCTCGAKSCIMASTISKGLSFEFSKCSQNQYQTYLTDHNPQCILNKPLTTVSGNELLEAGEECDCGAPENPCCDAATCKLRPRAQCAEGLCCDQCRFKGAGKICRRARGDNPDDRCTGQSADCPRNRFHA</sequence>
<protein>
    <recommendedName>
        <fullName>Zinc metalloproteinase/disintegrin</fullName>
    </recommendedName>
    <component>
        <recommendedName>
            <fullName>Snake venom metalloproteinase insularinase-A</fullName>
            <shortName>SVMP</shortName>
            <ecNumber>3.4.24.-</ecNumber>
        </recommendedName>
    </component>
    <component>
        <recommendedName>
            <fullName evidence="8">Disintegrin insularin</fullName>
        </recommendedName>
    </component>
</protein>
<keyword id="KW-1204">Blood coagulation cascade activating toxin</keyword>
<keyword id="KW-0106">Calcium</keyword>
<keyword id="KW-1217">Cell adhesion impairing toxin</keyword>
<keyword id="KW-0903">Direct protein sequencing</keyword>
<keyword id="KW-1015">Disulfide bond</keyword>
<keyword id="KW-1199">Hemostasis impairing toxin</keyword>
<keyword id="KW-0378">Hydrolase</keyword>
<keyword id="KW-0479">Metal-binding</keyword>
<keyword id="KW-0482">Metalloprotease</keyword>
<keyword id="KW-1201">Platelet aggregation inhibiting toxin</keyword>
<keyword id="KW-0645">Protease</keyword>
<keyword id="KW-0655">Prothrombin activator</keyword>
<keyword id="KW-0873">Pyrrolidone carboxylic acid</keyword>
<keyword id="KW-0964">Secreted</keyword>
<keyword id="KW-0732">Signal</keyword>
<keyword id="KW-0800">Toxin</keyword>
<keyword id="KW-0862">Zinc</keyword>
<keyword id="KW-0865">Zymogen</keyword>
<reference key="1">
    <citation type="journal article" date="2005" name="Biol. Chem.">
        <title>Insularinase A, a prothrombin activator from Bothrops insularis venom, is a metalloprotease derived from a gene encoding protease and disintegrin domains.</title>
        <authorList>
            <person name="de Albuquerque Modesto J.C."/>
            <person name="Junqueira-de-Azevedo I.L.M."/>
            <person name="Neves-Ferreira A.G.C."/>
            <person name="Fritzen M."/>
            <person name="Oliva M.L.V."/>
            <person name="Ho P.L."/>
            <person name="Perales J."/>
            <person name="Chudzinski-Tavassi A.M."/>
        </authorList>
    </citation>
    <scope>NUCLEOTIDE SEQUENCE [MRNA]</scope>
    <scope>PROTEIN SEQUENCE OF 195-212; 325-338; 354-362 AND 364-386</scope>
    <scope>FUNCTION OF THE METALLOPROTEINASE</scope>
    <scope>ACTIVITY REGULATION</scope>
    <scope>SUBUNIT</scope>
    <scope>MASS SPECTROMETRY</scope>
    <scope>SUBCELLULAR LOCATION</scope>
    <source>
        <tissue>Venom</tissue>
        <tissue>Venom gland</tissue>
    </source>
</reference>
<reference key="2">
    <citation type="journal article" date="2002" name="Gene">
        <title>A survey of gene expression and diversity in the venom glands of the pitviper snake Bothrops insularis through the generation of expressed sequence tags (ESTs).</title>
        <authorList>
            <person name="Junqueira-de-Azevedo I.L.M."/>
            <person name="Ho P.L."/>
        </authorList>
    </citation>
    <scope>NUCLEOTIDE SEQUENCE [LARGE SCALE MRNA]</scope>
    <source>
        <tissue>Venom gland</tissue>
    </source>
</reference>
<reference key="3">
    <citation type="journal article" date="2011" name="Toxicon">
        <title>Insularin, a disintegrin from Bothrops insularis venom: inhibition of platelet aggregation and endothelial cell adhesion by the native and recombinant GST-insularin proteins.</title>
        <authorList>
            <person name="Della-Casa M.S."/>
            <person name="Junqueira-de-Azevedo I."/>
            <person name="Butera D."/>
            <person name="Clissa P.B."/>
            <person name="Lopes D.S."/>
            <person name="Serrano S.M."/>
            <person name="Pimenta D.C."/>
            <person name="Magalhaes G.S."/>
            <person name="Ho P.L."/>
            <person name="Moura-da-Silva A.M."/>
        </authorList>
    </citation>
    <scope>PROTEIN SEQUENCE OF 404-423</scope>
    <scope>FUNCTION</scope>
    <scope>IDENTIFICATION BY MASS SPECTROMETRY</scope>
    <scope>RECOMBINANT EXPRESSION</scope>
    <scope>SUBCELLULAR LOCATION</scope>
    <source>
        <tissue>Venom</tissue>
    </source>
</reference>